<name>MDH_SYMTH</name>
<dbReference type="EC" id="1.1.1.37" evidence="1"/>
<dbReference type="EMBL" id="AP006840">
    <property type="protein sequence ID" value="BAD41528.1"/>
    <property type="molecule type" value="Genomic_DNA"/>
</dbReference>
<dbReference type="RefSeq" id="WP_011196666.1">
    <property type="nucleotide sequence ID" value="NC_006177.1"/>
</dbReference>
<dbReference type="SMR" id="Q67LB8"/>
<dbReference type="STRING" id="292459.STH2543"/>
<dbReference type="KEGG" id="sth:STH2543"/>
<dbReference type="eggNOG" id="COG0039">
    <property type="taxonomic scope" value="Bacteria"/>
</dbReference>
<dbReference type="HOGENOM" id="CLU_045401_2_1_9"/>
<dbReference type="OrthoDB" id="9802969at2"/>
<dbReference type="Proteomes" id="UP000000417">
    <property type="component" value="Chromosome"/>
</dbReference>
<dbReference type="GO" id="GO:0004459">
    <property type="term" value="F:L-lactate dehydrogenase activity"/>
    <property type="evidence" value="ECO:0007669"/>
    <property type="project" value="TreeGrafter"/>
</dbReference>
<dbReference type="GO" id="GO:0030060">
    <property type="term" value="F:L-malate dehydrogenase (NAD+) activity"/>
    <property type="evidence" value="ECO:0007669"/>
    <property type="project" value="UniProtKB-UniRule"/>
</dbReference>
<dbReference type="GO" id="GO:0006089">
    <property type="term" value="P:lactate metabolic process"/>
    <property type="evidence" value="ECO:0007669"/>
    <property type="project" value="TreeGrafter"/>
</dbReference>
<dbReference type="GO" id="GO:0006099">
    <property type="term" value="P:tricarboxylic acid cycle"/>
    <property type="evidence" value="ECO:0007669"/>
    <property type="project" value="UniProtKB-UniRule"/>
</dbReference>
<dbReference type="CDD" id="cd01339">
    <property type="entry name" value="LDH-like_MDH"/>
    <property type="match status" value="1"/>
</dbReference>
<dbReference type="FunFam" id="3.40.50.720:FF:000018">
    <property type="entry name" value="Malate dehydrogenase"/>
    <property type="match status" value="1"/>
</dbReference>
<dbReference type="FunFam" id="3.90.110.10:FF:000004">
    <property type="entry name" value="Malate dehydrogenase"/>
    <property type="match status" value="1"/>
</dbReference>
<dbReference type="Gene3D" id="3.90.110.10">
    <property type="entry name" value="Lactate dehydrogenase/glycoside hydrolase, family 4, C-terminal"/>
    <property type="match status" value="1"/>
</dbReference>
<dbReference type="Gene3D" id="3.40.50.720">
    <property type="entry name" value="NAD(P)-binding Rossmann-like Domain"/>
    <property type="match status" value="1"/>
</dbReference>
<dbReference type="HAMAP" id="MF_00487">
    <property type="entry name" value="Malate_dehydrog_3"/>
    <property type="match status" value="1"/>
</dbReference>
<dbReference type="InterPro" id="IPR001557">
    <property type="entry name" value="L-lactate/malate_DH"/>
</dbReference>
<dbReference type="InterPro" id="IPR022383">
    <property type="entry name" value="Lactate/malate_DH_C"/>
</dbReference>
<dbReference type="InterPro" id="IPR001236">
    <property type="entry name" value="Lactate/malate_DH_N"/>
</dbReference>
<dbReference type="InterPro" id="IPR015955">
    <property type="entry name" value="Lactate_DH/Glyco_Ohase_4_C"/>
</dbReference>
<dbReference type="InterPro" id="IPR011275">
    <property type="entry name" value="Malate_DH_type3"/>
</dbReference>
<dbReference type="InterPro" id="IPR036291">
    <property type="entry name" value="NAD(P)-bd_dom_sf"/>
</dbReference>
<dbReference type="NCBIfam" id="TIGR01763">
    <property type="entry name" value="MalateDH_bact"/>
    <property type="match status" value="1"/>
</dbReference>
<dbReference type="NCBIfam" id="NF004863">
    <property type="entry name" value="PRK06223.1"/>
    <property type="match status" value="1"/>
</dbReference>
<dbReference type="PANTHER" id="PTHR43128">
    <property type="entry name" value="L-2-HYDROXYCARBOXYLATE DEHYDROGENASE (NAD(P)(+))"/>
    <property type="match status" value="1"/>
</dbReference>
<dbReference type="PANTHER" id="PTHR43128:SF16">
    <property type="entry name" value="L-LACTATE DEHYDROGENASE"/>
    <property type="match status" value="1"/>
</dbReference>
<dbReference type="Pfam" id="PF02866">
    <property type="entry name" value="Ldh_1_C"/>
    <property type="match status" value="1"/>
</dbReference>
<dbReference type="Pfam" id="PF00056">
    <property type="entry name" value="Ldh_1_N"/>
    <property type="match status" value="1"/>
</dbReference>
<dbReference type="PIRSF" id="PIRSF000102">
    <property type="entry name" value="Lac_mal_DH"/>
    <property type="match status" value="1"/>
</dbReference>
<dbReference type="PRINTS" id="PR00086">
    <property type="entry name" value="LLDHDRGNASE"/>
</dbReference>
<dbReference type="SUPFAM" id="SSF56327">
    <property type="entry name" value="LDH C-terminal domain-like"/>
    <property type="match status" value="1"/>
</dbReference>
<dbReference type="SUPFAM" id="SSF51735">
    <property type="entry name" value="NAD(P)-binding Rossmann-fold domains"/>
    <property type="match status" value="1"/>
</dbReference>
<feature type="chain" id="PRO_0000113474" description="Malate dehydrogenase">
    <location>
        <begin position="1"/>
        <end position="315"/>
    </location>
</feature>
<feature type="active site" description="Proton acceptor" evidence="1">
    <location>
        <position position="178"/>
    </location>
</feature>
<feature type="binding site" evidence="1">
    <location>
        <begin position="10"/>
        <end position="15"/>
    </location>
    <ligand>
        <name>NAD(+)</name>
        <dbReference type="ChEBI" id="CHEBI:57540"/>
    </ligand>
</feature>
<feature type="binding site" evidence="1">
    <location>
        <position position="34"/>
    </location>
    <ligand>
        <name>NAD(+)</name>
        <dbReference type="ChEBI" id="CHEBI:57540"/>
    </ligand>
</feature>
<feature type="binding site" evidence="1">
    <location>
        <position position="85"/>
    </location>
    <ligand>
        <name>substrate</name>
    </ligand>
</feature>
<feature type="binding site" evidence="1">
    <location>
        <position position="91"/>
    </location>
    <ligand>
        <name>substrate</name>
    </ligand>
</feature>
<feature type="binding site" evidence="1">
    <location>
        <position position="98"/>
    </location>
    <ligand>
        <name>NAD(+)</name>
        <dbReference type="ChEBI" id="CHEBI:57540"/>
    </ligand>
</feature>
<feature type="binding site" evidence="1">
    <location>
        <begin position="121"/>
        <end position="123"/>
    </location>
    <ligand>
        <name>NAD(+)</name>
        <dbReference type="ChEBI" id="CHEBI:57540"/>
    </ligand>
</feature>
<feature type="binding site" evidence="1">
    <location>
        <position position="123"/>
    </location>
    <ligand>
        <name>substrate</name>
    </ligand>
</feature>
<feature type="binding site" evidence="1">
    <location>
        <position position="154"/>
    </location>
    <ligand>
        <name>substrate</name>
    </ligand>
</feature>
<sequence>MKRKKIAIVGSGFTGQGTALFAAARDLGDIVLVDLPARENYAKGVALDMMEAMPVYGSDTRLVGTSDYAEIAGADVVVITAGVPRKPGMSREDLVNTNAGIVKDVAEKVARYAPDSVIIVLTNPVDSMTYVALKASGFPKNRVIGQSGVLDTARFRTFLANAIGCSFQDVVGCVLGGHGDDMVPLVRYTSAGGIPVEKLLPKETIDAIVERTRKGGGEIVNLMGTSAGYAPGMALVEMIDAILNDRKRILPSIAYLEGEYGYTDMCLGVMTVLGGGGLEKVIELDLTDEEKVALDKGAQGVRNLIEMLKAGILAQ</sequence>
<reference key="1">
    <citation type="journal article" date="2004" name="Nucleic Acids Res.">
        <title>Genome sequence of Symbiobacterium thermophilum, an uncultivable bacterium that depends on microbial commensalism.</title>
        <authorList>
            <person name="Ueda K."/>
            <person name="Yamashita A."/>
            <person name="Ishikawa J."/>
            <person name="Shimada M."/>
            <person name="Watsuji T."/>
            <person name="Morimura K."/>
            <person name="Ikeda H."/>
            <person name="Hattori M."/>
            <person name="Beppu T."/>
        </authorList>
    </citation>
    <scope>NUCLEOTIDE SEQUENCE [LARGE SCALE GENOMIC DNA]</scope>
    <source>
        <strain>DSM 24528 / JCM 14929 / IAM 14863 / T</strain>
    </source>
</reference>
<organism>
    <name type="scientific">Symbiobacterium thermophilum (strain DSM 24528 / JCM 14929 / IAM 14863 / T)</name>
    <dbReference type="NCBI Taxonomy" id="292459"/>
    <lineage>
        <taxon>Bacteria</taxon>
        <taxon>Bacillati</taxon>
        <taxon>Bacillota</taxon>
        <taxon>Clostridia</taxon>
        <taxon>Eubacteriales</taxon>
        <taxon>Symbiobacteriaceae</taxon>
        <taxon>Symbiobacterium</taxon>
    </lineage>
</organism>
<proteinExistence type="inferred from homology"/>
<evidence type="ECO:0000255" key="1">
    <source>
        <dbReference type="HAMAP-Rule" id="MF_00487"/>
    </source>
</evidence>
<accession>Q67LB8</accession>
<protein>
    <recommendedName>
        <fullName evidence="1">Malate dehydrogenase</fullName>
        <ecNumber evidence="1">1.1.1.37</ecNumber>
    </recommendedName>
</protein>
<comment type="function">
    <text evidence="1">Catalyzes the reversible oxidation of malate to oxaloacetate.</text>
</comment>
<comment type="catalytic activity">
    <reaction evidence="1">
        <text>(S)-malate + NAD(+) = oxaloacetate + NADH + H(+)</text>
        <dbReference type="Rhea" id="RHEA:21432"/>
        <dbReference type="ChEBI" id="CHEBI:15378"/>
        <dbReference type="ChEBI" id="CHEBI:15589"/>
        <dbReference type="ChEBI" id="CHEBI:16452"/>
        <dbReference type="ChEBI" id="CHEBI:57540"/>
        <dbReference type="ChEBI" id="CHEBI:57945"/>
        <dbReference type="EC" id="1.1.1.37"/>
    </reaction>
</comment>
<comment type="similarity">
    <text evidence="1">Belongs to the LDH/MDH superfamily. MDH type 3 family.</text>
</comment>
<keyword id="KW-0520">NAD</keyword>
<keyword id="KW-0560">Oxidoreductase</keyword>
<keyword id="KW-1185">Reference proteome</keyword>
<keyword id="KW-0816">Tricarboxylic acid cycle</keyword>
<gene>
    <name evidence="1" type="primary">mdh</name>
    <name type="ordered locus">STH2543</name>
</gene>